<proteinExistence type="inferred from homology"/>
<evidence type="ECO:0000255" key="1">
    <source>
        <dbReference type="HAMAP-Rule" id="MF_00484"/>
    </source>
</evidence>
<protein>
    <recommendedName>
        <fullName evidence="1">Glycogen synthase</fullName>
        <ecNumber evidence="1">2.4.1.21</ecNumber>
    </recommendedName>
    <alternativeName>
        <fullName evidence="1">Starch [bacterial glycogen] synthase</fullName>
    </alternativeName>
</protein>
<keyword id="KW-0320">Glycogen biosynthesis</keyword>
<keyword id="KW-0328">Glycosyltransferase</keyword>
<keyword id="KW-0808">Transferase</keyword>
<feature type="chain" id="PRO_1000126109" description="Glycogen synthase">
    <location>
        <begin position="1"/>
        <end position="486"/>
    </location>
</feature>
<feature type="binding site" evidence="1">
    <location>
        <position position="15"/>
    </location>
    <ligand>
        <name>ADP-alpha-D-glucose</name>
        <dbReference type="ChEBI" id="CHEBI:57498"/>
    </ligand>
</feature>
<dbReference type="EC" id="2.4.1.21" evidence="1"/>
<dbReference type="EMBL" id="CP000969">
    <property type="protein sequence ID" value="ACB08394.1"/>
    <property type="molecule type" value="Genomic_DNA"/>
</dbReference>
<dbReference type="RefSeq" id="WP_011942738.1">
    <property type="nucleotide sequence ID" value="NC_010483.1"/>
</dbReference>
<dbReference type="SMR" id="B1LC39"/>
<dbReference type="CAZy" id="GT5">
    <property type="family name" value="Glycosyltransferase Family 5"/>
</dbReference>
<dbReference type="KEGG" id="trq:TRQ2_0032"/>
<dbReference type="HOGENOM" id="CLU_009583_18_2_0"/>
<dbReference type="UniPathway" id="UPA00164"/>
<dbReference type="Proteomes" id="UP000001687">
    <property type="component" value="Chromosome"/>
</dbReference>
<dbReference type="GO" id="GO:0009011">
    <property type="term" value="F:alpha-1,4-glucan glucosyltransferase (ADP-glucose donor) activity"/>
    <property type="evidence" value="ECO:0007669"/>
    <property type="project" value="UniProtKB-UniRule"/>
</dbReference>
<dbReference type="GO" id="GO:0004373">
    <property type="term" value="F:alpha-1,4-glucan glucosyltransferase (UDP-glucose donor) activity"/>
    <property type="evidence" value="ECO:0007669"/>
    <property type="project" value="InterPro"/>
</dbReference>
<dbReference type="GO" id="GO:0005978">
    <property type="term" value="P:glycogen biosynthetic process"/>
    <property type="evidence" value="ECO:0007669"/>
    <property type="project" value="UniProtKB-UniRule"/>
</dbReference>
<dbReference type="CDD" id="cd03791">
    <property type="entry name" value="GT5_Glycogen_synthase_DULL1-like"/>
    <property type="match status" value="1"/>
</dbReference>
<dbReference type="Gene3D" id="3.40.50.2000">
    <property type="entry name" value="Glycogen Phosphorylase B"/>
    <property type="match status" value="2"/>
</dbReference>
<dbReference type="HAMAP" id="MF_00484">
    <property type="entry name" value="Glycogen_synth"/>
    <property type="match status" value="1"/>
</dbReference>
<dbReference type="InterPro" id="IPR001296">
    <property type="entry name" value="Glyco_trans_1"/>
</dbReference>
<dbReference type="InterPro" id="IPR011835">
    <property type="entry name" value="GS/SS"/>
</dbReference>
<dbReference type="InterPro" id="IPR013534">
    <property type="entry name" value="Starch_synth_cat_dom"/>
</dbReference>
<dbReference type="NCBIfam" id="TIGR02095">
    <property type="entry name" value="glgA"/>
    <property type="match status" value="1"/>
</dbReference>
<dbReference type="PANTHER" id="PTHR45825:SF11">
    <property type="entry name" value="ALPHA AMYLASE DOMAIN-CONTAINING PROTEIN"/>
    <property type="match status" value="1"/>
</dbReference>
<dbReference type="PANTHER" id="PTHR45825">
    <property type="entry name" value="GRANULE-BOUND STARCH SYNTHASE 1, CHLOROPLASTIC/AMYLOPLASTIC"/>
    <property type="match status" value="1"/>
</dbReference>
<dbReference type="Pfam" id="PF08323">
    <property type="entry name" value="Glyco_transf_5"/>
    <property type="match status" value="1"/>
</dbReference>
<dbReference type="Pfam" id="PF00534">
    <property type="entry name" value="Glycos_transf_1"/>
    <property type="match status" value="1"/>
</dbReference>
<dbReference type="SUPFAM" id="SSF53756">
    <property type="entry name" value="UDP-Glycosyltransferase/glycogen phosphorylase"/>
    <property type="match status" value="1"/>
</dbReference>
<gene>
    <name evidence="1" type="primary">glgA</name>
    <name type="ordered locus">TRQ2_0032</name>
</gene>
<comment type="function">
    <text evidence="1">Synthesizes alpha-1,4-glucan chains using ADP-glucose.</text>
</comment>
<comment type="catalytic activity">
    <reaction evidence="1">
        <text>[(1-&gt;4)-alpha-D-glucosyl](n) + ADP-alpha-D-glucose = [(1-&gt;4)-alpha-D-glucosyl](n+1) + ADP + H(+)</text>
        <dbReference type="Rhea" id="RHEA:18189"/>
        <dbReference type="Rhea" id="RHEA-COMP:9584"/>
        <dbReference type="Rhea" id="RHEA-COMP:9587"/>
        <dbReference type="ChEBI" id="CHEBI:15378"/>
        <dbReference type="ChEBI" id="CHEBI:15444"/>
        <dbReference type="ChEBI" id="CHEBI:57498"/>
        <dbReference type="ChEBI" id="CHEBI:456216"/>
        <dbReference type="EC" id="2.4.1.21"/>
    </reaction>
</comment>
<comment type="pathway">
    <text evidence="1">Glycan biosynthesis; glycogen biosynthesis.</text>
</comment>
<comment type="similarity">
    <text evidence="1">Belongs to the glycosyltransferase 1 family. Bacterial/plant glycogen synthase subfamily.</text>
</comment>
<reference key="1">
    <citation type="journal article" date="2011" name="J. Bacteriol.">
        <title>Genome sequence of Thermotoga sp. strain RQ2, a hyperthermophilic bacterium isolated from a geothermally heated region of the seafloor near Ribeira Quente, the Azores.</title>
        <authorList>
            <person name="Swithers K.S."/>
            <person name="DiPippo J.L."/>
            <person name="Bruce D.C."/>
            <person name="Detter C."/>
            <person name="Tapia R."/>
            <person name="Han S."/>
            <person name="Saunders E."/>
            <person name="Goodwin L.A."/>
            <person name="Han J."/>
            <person name="Woyke T."/>
            <person name="Pitluck S."/>
            <person name="Pennacchio L."/>
            <person name="Nolan M."/>
            <person name="Mikhailova N."/>
            <person name="Lykidis A."/>
            <person name="Land M.L."/>
            <person name="Brettin T."/>
            <person name="Stetter K.O."/>
            <person name="Nelson K.E."/>
            <person name="Gogarten J.P."/>
            <person name="Noll K.M."/>
        </authorList>
    </citation>
    <scope>NUCLEOTIDE SEQUENCE [LARGE SCALE GENOMIC DNA]</scope>
    <source>
        <strain>RQ2</strain>
    </source>
</reference>
<organism>
    <name type="scientific">Thermotoga sp. (strain RQ2)</name>
    <dbReference type="NCBI Taxonomy" id="126740"/>
    <lineage>
        <taxon>Bacteria</taxon>
        <taxon>Thermotogati</taxon>
        <taxon>Thermotogota</taxon>
        <taxon>Thermotogae</taxon>
        <taxon>Thermotogales</taxon>
        <taxon>Thermotogaceae</taxon>
        <taxon>Thermotoga</taxon>
    </lineage>
</organism>
<accession>B1LC39</accession>
<name>GLGA_THESQ</name>
<sequence>MKVVFVSYEVFPFAKVGGLADVAGTLPKYLKKHGVDVTIVMPKHRIVEKNAEKFGYEIKKVAEGLSVSHVKTDQKFDIYESVLPGSDVKTYFVANDYYFSAEDVYAGPDLGEQAIFFCAATLDLVKHLDLKPDIVHVNDWQTALIPVYLKTVYRDDPYFSRTATVLTIHNLGYQGVFDPKYLSFAGLPDYVFTIDGLEFYRQLNFLKGGIVFSDVINTVSPTYAEEIQTEEYGEKLEGVLRMRSKDLYGILNGIDYELYNPATDRYIYVNYDVNRLELKWENKVKLQEELGLPVNKETAVAGLISRLVPQKGLDLLVDVMDYLMLFDLQIVVLGTGDEQYENAFRKFQERYPDKVSANIKFDVELAQKIYAGADIFLMPSRYEPCGLGQMFSMRYGTIPVVRYTGGLADTVKEYDPQSMEGTGFGFKKYDSAHLLKAVSKALHFYYREKDHWRRIMTNAMNTDLSWDRSAKEYVDLYKKALAKVGR</sequence>